<accession>Q8NH54</accession>
<accession>A6NN77</accession>
<accession>Q6IFF7</accession>
<name>O56A3_HUMAN</name>
<dbReference type="EMBL" id="AB065537">
    <property type="protein sequence ID" value="BAC05783.1"/>
    <property type="status" value="ALT_SEQ"/>
    <property type="molecule type" value="Genomic_DNA"/>
</dbReference>
<dbReference type="EMBL" id="AC025016">
    <property type="status" value="NOT_ANNOTATED_CDS"/>
    <property type="molecule type" value="Genomic_DNA"/>
</dbReference>
<dbReference type="EMBL" id="BK004305">
    <property type="protein sequence ID" value="DAA04703.1"/>
    <property type="molecule type" value="Genomic_DNA"/>
</dbReference>
<dbReference type="CCDS" id="CCDS41614.1"/>
<dbReference type="RefSeq" id="NP_001003443.2">
    <property type="nucleotide sequence ID" value="NM_001003443.3"/>
</dbReference>
<dbReference type="RefSeq" id="XP_047282882.1">
    <property type="nucleotide sequence ID" value="XM_047426926.1"/>
</dbReference>
<dbReference type="SMR" id="Q8NH54"/>
<dbReference type="BioGRID" id="133392">
    <property type="interactions" value="1"/>
</dbReference>
<dbReference type="FunCoup" id="Q8NH54">
    <property type="interactions" value="460"/>
</dbReference>
<dbReference type="IntAct" id="Q8NH54">
    <property type="interactions" value="1"/>
</dbReference>
<dbReference type="STRING" id="9606.ENSP00000493319"/>
<dbReference type="GlyCosmos" id="Q8NH54">
    <property type="glycosylation" value="2 sites, No reported glycans"/>
</dbReference>
<dbReference type="GlyGen" id="Q8NH54">
    <property type="glycosylation" value="2 sites"/>
</dbReference>
<dbReference type="iPTMnet" id="Q8NH54"/>
<dbReference type="PhosphoSitePlus" id="Q8NH54"/>
<dbReference type="BioMuta" id="OR56A3"/>
<dbReference type="DMDM" id="38372812"/>
<dbReference type="MassIVE" id="Q8NH54"/>
<dbReference type="PaxDb" id="9606-ENSP00000331572"/>
<dbReference type="PeptideAtlas" id="Q8NH54"/>
<dbReference type="Antibodypedia" id="57955">
    <property type="antibodies" value="42 antibodies from 14 providers"/>
</dbReference>
<dbReference type="DNASU" id="390083"/>
<dbReference type="Ensembl" id="ENST00000641160.1">
    <property type="protein sequence ID" value="ENSP00000493059.1"/>
    <property type="gene ID" value="ENSG00000184478.8"/>
</dbReference>
<dbReference type="Ensembl" id="ENST00000641905.1">
    <property type="protein sequence ID" value="ENSP00000493319.1"/>
    <property type="gene ID" value="ENSG00000184478.8"/>
</dbReference>
<dbReference type="GeneID" id="390083"/>
<dbReference type="KEGG" id="hsa:390083"/>
<dbReference type="MANE-Select" id="ENST00000641160.1">
    <property type="protein sequence ID" value="ENSP00000493059.1"/>
    <property type="RefSeq nucleotide sequence ID" value="NM_001003443.3"/>
    <property type="RefSeq protein sequence ID" value="NP_001003443.2"/>
</dbReference>
<dbReference type="UCSC" id="uc010qzt.3">
    <property type="organism name" value="human"/>
</dbReference>
<dbReference type="AGR" id="HGNC:14786"/>
<dbReference type="CTD" id="390083"/>
<dbReference type="GeneCards" id="OR56A3"/>
<dbReference type="HGNC" id="HGNC:14786">
    <property type="gene designation" value="OR56A3"/>
</dbReference>
<dbReference type="HPA" id="ENSG00000184478">
    <property type="expression patterns" value="Not detected"/>
</dbReference>
<dbReference type="neXtProt" id="NX_Q8NH54"/>
<dbReference type="PharmGKB" id="PA32445"/>
<dbReference type="VEuPathDB" id="HostDB:ENSG00000184478"/>
<dbReference type="eggNOG" id="ENOG502SJUD">
    <property type="taxonomic scope" value="Eukaryota"/>
</dbReference>
<dbReference type="GeneTree" id="ENSGT00940000155550"/>
<dbReference type="HOGENOM" id="CLU_012526_0_0_1"/>
<dbReference type="InParanoid" id="Q8NH54"/>
<dbReference type="OMA" id="AQLSYCG"/>
<dbReference type="OrthoDB" id="9448904at2759"/>
<dbReference type="PAN-GO" id="Q8NH54">
    <property type="GO annotations" value="0 GO annotations based on evolutionary models"/>
</dbReference>
<dbReference type="PhylomeDB" id="Q8NH54"/>
<dbReference type="TreeFam" id="TF344049"/>
<dbReference type="PathwayCommons" id="Q8NH54"/>
<dbReference type="Reactome" id="R-HSA-9752946">
    <property type="pathway name" value="Expression and translocation of olfactory receptors"/>
</dbReference>
<dbReference type="SignaLink" id="Q8NH54"/>
<dbReference type="BioGRID-ORCS" id="390083">
    <property type="hits" value="8 hits in 744 CRISPR screens"/>
</dbReference>
<dbReference type="GeneWiki" id="OR56A3"/>
<dbReference type="GenomeRNAi" id="390083"/>
<dbReference type="Pharos" id="Q8NH54">
    <property type="development level" value="Tdark"/>
</dbReference>
<dbReference type="PRO" id="PR:Q8NH54"/>
<dbReference type="Proteomes" id="UP000005640">
    <property type="component" value="Chromosome 11"/>
</dbReference>
<dbReference type="RNAct" id="Q8NH54">
    <property type="molecule type" value="protein"/>
</dbReference>
<dbReference type="Bgee" id="ENSG00000184478">
    <property type="expression patterns" value="Expressed in male germ line stem cell (sensu Vertebrata) in testis and 15 other cell types or tissues"/>
</dbReference>
<dbReference type="ExpressionAtlas" id="Q8NH54">
    <property type="expression patterns" value="baseline and differential"/>
</dbReference>
<dbReference type="GO" id="GO:0005886">
    <property type="term" value="C:plasma membrane"/>
    <property type="evidence" value="ECO:0000318"/>
    <property type="project" value="GO_Central"/>
</dbReference>
<dbReference type="GO" id="GO:0004930">
    <property type="term" value="F:G protein-coupled receptor activity"/>
    <property type="evidence" value="ECO:0007669"/>
    <property type="project" value="UniProtKB-KW"/>
</dbReference>
<dbReference type="GO" id="GO:0004984">
    <property type="term" value="F:olfactory receptor activity"/>
    <property type="evidence" value="ECO:0000318"/>
    <property type="project" value="GO_Central"/>
</dbReference>
<dbReference type="CDD" id="cd15223">
    <property type="entry name" value="7tmA_OR56-like"/>
    <property type="match status" value="1"/>
</dbReference>
<dbReference type="FunFam" id="1.20.1070.10:FF:000002">
    <property type="entry name" value="Olfactory receptor"/>
    <property type="match status" value="1"/>
</dbReference>
<dbReference type="Gene3D" id="1.20.1070.10">
    <property type="entry name" value="Rhodopsin 7-helix transmembrane proteins"/>
    <property type="match status" value="1"/>
</dbReference>
<dbReference type="InterPro" id="IPR000276">
    <property type="entry name" value="GPCR_Rhodpsn"/>
</dbReference>
<dbReference type="InterPro" id="IPR017452">
    <property type="entry name" value="GPCR_Rhodpsn_7TM"/>
</dbReference>
<dbReference type="InterPro" id="IPR000725">
    <property type="entry name" value="Olfact_rcpt"/>
</dbReference>
<dbReference type="InterPro" id="IPR050402">
    <property type="entry name" value="OR51/52/56-like"/>
</dbReference>
<dbReference type="PANTHER" id="PTHR26450:SF40">
    <property type="entry name" value="OLFACTORY RECEPTOR 56A3"/>
    <property type="match status" value="1"/>
</dbReference>
<dbReference type="PANTHER" id="PTHR26450">
    <property type="entry name" value="OLFACTORY RECEPTOR 56B1-RELATED"/>
    <property type="match status" value="1"/>
</dbReference>
<dbReference type="Pfam" id="PF13853">
    <property type="entry name" value="7tm_4"/>
    <property type="match status" value="1"/>
</dbReference>
<dbReference type="PRINTS" id="PR00237">
    <property type="entry name" value="GPCRRHODOPSN"/>
</dbReference>
<dbReference type="PRINTS" id="PR00245">
    <property type="entry name" value="OLFACTORYR"/>
</dbReference>
<dbReference type="SUPFAM" id="SSF81321">
    <property type="entry name" value="Family A G protein-coupled receptor-like"/>
    <property type="match status" value="1"/>
</dbReference>
<dbReference type="PROSITE" id="PS50262">
    <property type="entry name" value="G_PROTEIN_RECEP_F1_2"/>
    <property type="match status" value="1"/>
</dbReference>
<proteinExistence type="inferred from homology"/>
<reference key="1">
    <citation type="submission" date="2001-07" db="EMBL/GenBank/DDBJ databases">
        <title>Genome-wide discovery and analysis of human seven transmembrane helix receptor genes.</title>
        <authorList>
            <person name="Suwa M."/>
            <person name="Sato T."/>
            <person name="Okouchi I."/>
            <person name="Arita M."/>
            <person name="Futami K."/>
            <person name="Matsumoto S."/>
            <person name="Tsutsumi S."/>
            <person name="Aburatani H."/>
            <person name="Asai K."/>
            <person name="Akiyama Y."/>
        </authorList>
    </citation>
    <scope>NUCLEOTIDE SEQUENCE [GENOMIC DNA]</scope>
</reference>
<reference key="2">
    <citation type="journal article" date="2006" name="Nature">
        <title>Human chromosome 11 DNA sequence and analysis including novel gene identification.</title>
        <authorList>
            <person name="Taylor T.D."/>
            <person name="Noguchi H."/>
            <person name="Totoki Y."/>
            <person name="Toyoda A."/>
            <person name="Kuroki Y."/>
            <person name="Dewar K."/>
            <person name="Lloyd C."/>
            <person name="Itoh T."/>
            <person name="Takeda T."/>
            <person name="Kim D.-W."/>
            <person name="She X."/>
            <person name="Barlow K.F."/>
            <person name="Bloom T."/>
            <person name="Bruford E."/>
            <person name="Chang J.L."/>
            <person name="Cuomo C.A."/>
            <person name="Eichler E."/>
            <person name="FitzGerald M.G."/>
            <person name="Jaffe D.B."/>
            <person name="LaButti K."/>
            <person name="Nicol R."/>
            <person name="Park H.-S."/>
            <person name="Seaman C."/>
            <person name="Sougnez C."/>
            <person name="Yang X."/>
            <person name="Zimmer A.R."/>
            <person name="Zody M.C."/>
            <person name="Birren B.W."/>
            <person name="Nusbaum C."/>
            <person name="Fujiyama A."/>
            <person name="Hattori M."/>
            <person name="Rogers J."/>
            <person name="Lander E.S."/>
            <person name="Sakaki Y."/>
        </authorList>
    </citation>
    <scope>NUCLEOTIDE SEQUENCE [LARGE SCALE GENOMIC DNA]</scope>
</reference>
<reference key="3">
    <citation type="journal article" date="2004" name="Proc. Natl. Acad. Sci. U.S.A.">
        <title>The human olfactory receptor gene family.</title>
        <authorList>
            <person name="Malnic B."/>
            <person name="Godfrey P.A."/>
            <person name="Buck L.B."/>
        </authorList>
    </citation>
    <scope>IDENTIFICATION</scope>
</reference>
<reference key="4">
    <citation type="journal article" date="2004" name="Proc. Natl. Acad. Sci. U.S.A.">
        <authorList>
            <person name="Malnic B."/>
            <person name="Godfrey P.A."/>
            <person name="Buck L.B."/>
        </authorList>
    </citation>
    <scope>ERRATUM OF PUBMED:14983052</scope>
</reference>
<organism>
    <name type="scientific">Homo sapiens</name>
    <name type="common">Human</name>
    <dbReference type="NCBI Taxonomy" id="9606"/>
    <lineage>
        <taxon>Eukaryota</taxon>
        <taxon>Metazoa</taxon>
        <taxon>Chordata</taxon>
        <taxon>Craniata</taxon>
        <taxon>Vertebrata</taxon>
        <taxon>Euteleostomi</taxon>
        <taxon>Mammalia</taxon>
        <taxon>Eutheria</taxon>
        <taxon>Euarchontoglires</taxon>
        <taxon>Primates</taxon>
        <taxon>Haplorrhini</taxon>
        <taxon>Catarrhini</taxon>
        <taxon>Hominidae</taxon>
        <taxon>Homo</taxon>
    </lineage>
</organism>
<keyword id="KW-1003">Cell membrane</keyword>
<keyword id="KW-1015">Disulfide bond</keyword>
<keyword id="KW-0297">G-protein coupled receptor</keyword>
<keyword id="KW-0325">Glycoprotein</keyword>
<keyword id="KW-0472">Membrane</keyword>
<keyword id="KW-0552">Olfaction</keyword>
<keyword id="KW-0675">Receptor</keyword>
<keyword id="KW-1185">Reference proteome</keyword>
<keyword id="KW-0716">Sensory transduction</keyword>
<keyword id="KW-0807">Transducer</keyword>
<keyword id="KW-0812">Transmembrane</keyword>
<keyword id="KW-1133">Transmembrane helix</keyword>
<protein>
    <recommendedName>
        <fullName>Olfactory receptor 56A3</fullName>
    </recommendedName>
    <alternativeName>
        <fullName>Olfactory receptor 56A6</fullName>
    </alternativeName>
</protein>
<comment type="function">
    <text evidence="3">Odorant receptor.</text>
</comment>
<comment type="subcellular location">
    <subcellularLocation>
        <location>Cell membrane</location>
        <topology>Multi-pass membrane protein</topology>
    </subcellularLocation>
</comment>
<comment type="similarity">
    <text evidence="2">Belongs to the G-protein coupled receptor 1 family.</text>
</comment>
<comment type="sequence caution" evidence="3">
    <conflict type="erroneous gene model prediction">
        <sequence resource="EMBL-CDS" id="BAC05783"/>
    </conflict>
</comment>
<comment type="online information" name="Human Olfactory Receptor Data Exploratorium (HORDE)">
    <link uri="http://genome.weizmann.ac.il/horde/card/index/symbol:OR56A3"/>
</comment>
<gene>
    <name type="primary">OR56A3</name>
    <name type="synonym">OR56A3P</name>
    <name type="synonym">OR56A6</name>
</gene>
<sequence>MTTHRNDTLSTEASDFLLNCFVRSPSWQHWLSLPLSLLFLLAVGANTTLLMTIWLEASLHQPLYYLLSLLSLLDIVLCLTVIPKVLTIFWFDLRPISFPACFLQMYIMNCFLAMESCTFMVMAYDRYVAICHPLRYPSIITDHFVVKAAMFILTRNVLMTLPIPILSAQLRYCGRNVIENCICANMSVSRLSCDDVTINHLYQFAGGWTLLGSDLILIFLSYTFILRAVLRLKAEGAVAKALSTCGSHFMLILFFSTILLVFVLTHVAKKKVSPDVPVLLNVLHHVIPAALNPIIYGVRTQEIKQGMQRLLKKGC</sequence>
<evidence type="ECO:0000255" key="1"/>
<evidence type="ECO:0000255" key="2">
    <source>
        <dbReference type="PROSITE-ProRule" id="PRU00521"/>
    </source>
</evidence>
<evidence type="ECO:0000305" key="3"/>
<feature type="chain" id="PRO_0000150794" description="Olfactory receptor 56A3">
    <location>
        <begin position="1"/>
        <end position="315"/>
    </location>
</feature>
<feature type="topological domain" description="Extracellular" evidence="1">
    <location>
        <begin position="1"/>
        <end position="29"/>
    </location>
</feature>
<feature type="transmembrane region" description="Helical; Name=1" evidence="1">
    <location>
        <begin position="30"/>
        <end position="50"/>
    </location>
</feature>
<feature type="topological domain" description="Cytoplasmic" evidence="1">
    <location>
        <begin position="51"/>
        <end position="58"/>
    </location>
</feature>
<feature type="transmembrane region" description="Helical; Name=2" evidence="1">
    <location>
        <begin position="59"/>
        <end position="79"/>
    </location>
</feature>
<feature type="topological domain" description="Extracellular" evidence="1">
    <location>
        <begin position="80"/>
        <end position="103"/>
    </location>
</feature>
<feature type="transmembrane region" description="Helical; Name=3" evidence="1">
    <location>
        <begin position="104"/>
        <end position="124"/>
    </location>
</feature>
<feature type="topological domain" description="Cytoplasmic" evidence="1">
    <location>
        <begin position="125"/>
        <end position="143"/>
    </location>
</feature>
<feature type="transmembrane region" description="Helical; Name=4" evidence="1">
    <location>
        <begin position="144"/>
        <end position="164"/>
    </location>
</feature>
<feature type="topological domain" description="Extracellular" evidence="1">
    <location>
        <begin position="165"/>
        <end position="200"/>
    </location>
</feature>
<feature type="transmembrane region" description="Helical; Name=5" evidence="1">
    <location>
        <begin position="201"/>
        <end position="221"/>
    </location>
</feature>
<feature type="topological domain" description="Cytoplasmic" evidence="1">
    <location>
        <begin position="222"/>
        <end position="241"/>
    </location>
</feature>
<feature type="transmembrane region" description="Helical; Name=6" evidence="1">
    <location>
        <begin position="242"/>
        <end position="262"/>
    </location>
</feature>
<feature type="topological domain" description="Extracellular" evidence="1">
    <location>
        <begin position="263"/>
        <end position="277"/>
    </location>
</feature>
<feature type="transmembrane region" description="Helical; Name=7" evidence="1">
    <location>
        <begin position="278"/>
        <end position="298"/>
    </location>
</feature>
<feature type="topological domain" description="Cytoplasmic" evidence="1">
    <location>
        <begin position="299"/>
        <end position="315"/>
    </location>
</feature>
<feature type="glycosylation site" description="N-linked (GlcNAc...) asparagine" evidence="1">
    <location>
        <position position="6"/>
    </location>
</feature>
<feature type="glycosylation site" description="N-linked (GlcNAc...) asparagine" evidence="1">
    <location>
        <position position="185"/>
    </location>
</feature>
<feature type="disulfide bond" evidence="2">
    <location>
        <begin position="101"/>
        <end position="193"/>
    </location>
</feature>
<feature type="sequence variant" id="VAR_024152" description="In dbSNP:rs1840178.">
    <original>M</original>
    <variation>T</variation>
    <location>
        <position position="51"/>
    </location>
</feature>